<evidence type="ECO:0000255" key="1"/>
<feature type="signal peptide" evidence="1">
    <location>
        <begin position="1"/>
        <end position="22"/>
    </location>
</feature>
<feature type="chain" id="PRO_0000317020" description="Putative adhesin A1I_01215">
    <location>
        <begin position="23"/>
        <end position="228"/>
    </location>
</feature>
<accession>A8GUX2</accession>
<proteinExistence type="inferred from homology"/>
<organism>
    <name type="scientific">Rickettsia bellii (strain OSU 85-389)</name>
    <dbReference type="NCBI Taxonomy" id="391896"/>
    <lineage>
        <taxon>Bacteria</taxon>
        <taxon>Pseudomonadati</taxon>
        <taxon>Pseudomonadota</taxon>
        <taxon>Alphaproteobacteria</taxon>
        <taxon>Rickettsiales</taxon>
        <taxon>Rickettsiaceae</taxon>
        <taxon>Rickettsieae</taxon>
        <taxon>Rickettsia</taxon>
        <taxon>belli group</taxon>
    </lineage>
</organism>
<gene>
    <name type="ordered locus">A1I_01215</name>
</gene>
<sequence length="228" mass="23956">MKKLLLIAATSATVLSSALSFADCGNDSWYLRVDAGAAMFNKEKDNQTGLKLKSNTAFTGDIGVGNYIAENFRADLTLGTTFSGKLKKSGAVSSLGGANISASHKPNITRLLINGYVDLSNFEMFDVFAGAGIGASMLKEKVSFSGINSGATVSTSYSSKNTTNLAYKLTLGASSQISDGVKAELAYSWISDGKTKGGNVNLFGLGNKQVKGTRYQSHNLTAGLRFDV</sequence>
<dbReference type="EMBL" id="CP000849">
    <property type="protein sequence ID" value="ABV78639.1"/>
    <property type="molecule type" value="Genomic_DNA"/>
</dbReference>
<dbReference type="RefSeq" id="WP_012151594.1">
    <property type="nucleotide sequence ID" value="NC_009883.1"/>
</dbReference>
<dbReference type="KEGG" id="rbo:A1I_01215"/>
<dbReference type="HOGENOM" id="CLU_1146500_0_0_5"/>
<dbReference type="Gene3D" id="2.40.160.20">
    <property type="match status" value="1"/>
</dbReference>
<dbReference type="InterPro" id="IPR011250">
    <property type="entry name" value="OMP/PagP_b-brl"/>
</dbReference>
<dbReference type="SUPFAM" id="SSF56925">
    <property type="entry name" value="OMPA-like"/>
    <property type="match status" value="1"/>
</dbReference>
<name>Y1215_RICB8</name>
<keyword id="KW-0732">Signal</keyword>
<protein>
    <recommendedName>
        <fullName>Putative adhesin A1I_01215</fullName>
    </recommendedName>
</protein>
<reference key="1">
    <citation type="submission" date="2007-09" db="EMBL/GenBank/DDBJ databases">
        <title>Complete genome sequencing of Rickettsia bellii.</title>
        <authorList>
            <person name="Madan A."/>
            <person name="Lee H."/>
            <person name="Madan A."/>
            <person name="Yoon J.-G."/>
            <person name="Ryu G.-Y."/>
            <person name="Dasch G."/>
            <person name="Ereemeva M."/>
        </authorList>
    </citation>
    <scope>NUCLEOTIDE SEQUENCE [LARGE SCALE GENOMIC DNA]</scope>
    <source>
        <strain>OSU 85-389</strain>
    </source>
</reference>